<protein>
    <recommendedName>
        <fullName evidence="1">Proteasome-associated ATPase</fullName>
    </recommendedName>
    <alternativeName>
        <fullName evidence="1">AAA ATPase forming ring-shaped complexes</fullName>
        <shortName evidence="1">ARC</shortName>
    </alternativeName>
    <alternativeName>
        <fullName evidence="1">Mycobacterial proteasome ATPase</fullName>
    </alternativeName>
</protein>
<sequence>MSESERSEAFGTPDAAEVERLRREVAALREQLEGSAARGPGDSGRLRDLNQLEARIDSLNARNAKLMDTLKEARQQLLALREEVDRLGQPPSGYGVLLAVQTDETVDVFTSGRKMRVTCSPNIETSELRRGQTVRLNEALTVVEAGNFESVGEISTLREVLDDGHRALVVGHADEERIVWLADPLIAPDLSEVSEDADGADLKPRKLRPGDSLLVDTKAGYAFERIPKAEVEDLVLEEVPDVSYSDIGGLARQIEQIRDAVELPFLHKDLYQEYSLRPPKGVLLYGPPGCGKTLIAKAVANSLAKKMAELRGDDSREAKSYFLNIKGPELLNKFVGETERHIRLIFQRAREKASDGTPVIVFFDEMDSIFRTRGTGVSSDVETTVVPQLLSEIDGVEGLENVIVIGASNREDMIDPAILRPGRLDVKIKIERPDAESAQDIFSKYLTVDLPVHSEDLAEFGGDRGLTVKAMIEKVVDRMYAEIDDNRFLEVTYANGDKEVMYFKDFNSGAMIQNVVDRAKKNAIKSVLETGQKGLRIQHLLDSIVDEFAENEDLPNTTNPDDWARISGKKGERIVYIRTLVTGKSSSASRAIDTESSLGQYL</sequence>
<keyword id="KW-0067">ATP-binding</keyword>
<keyword id="KW-0143">Chaperone</keyword>
<keyword id="KW-0175">Coiled coil</keyword>
<keyword id="KW-0547">Nucleotide-binding</keyword>
<keyword id="KW-0647">Proteasome</keyword>
<keyword id="KW-1185">Reference proteome</keyword>
<gene>
    <name evidence="1" type="primary">mpa</name>
    <name type="ordered locus">MAB_2162</name>
</gene>
<comment type="function">
    <text evidence="1">ATPase which is responsible for recognizing, binding, unfolding and translocation of pupylated proteins into the bacterial 20S proteasome core particle. May be essential for opening the gate of the 20S proteasome via an interaction with its C-terminus, thereby allowing substrate entry and access to the site of proteolysis. Thus, the C-termini of the proteasomal ATPase may function like a 'key in a lock' to induce gate opening and therefore regulate proteolysis.</text>
</comment>
<comment type="pathway">
    <text evidence="1">Protein degradation; proteasomal Pup-dependent pathway.</text>
</comment>
<comment type="subunit">
    <text evidence="1">Homohexamer. Assembles into a hexameric ring structure that caps the 20S proteasome core. Strongly interacts with the prokaryotic ubiquitin-like protein Pup through a hydrophobic interface; the interacting region of ARC lies in its N-terminal coiled-coil domain. There is one Pup binding site per ARC hexamer ring. Upon ATP-binding, the C-terminus of ARC interacts with the alpha-rings of the proteasome core, possibly by binding to the intersubunit pockets.</text>
</comment>
<comment type="domain">
    <text evidence="1">Consists of three main regions, an N-terminal coiled-coil domain that binds to protein Pup and functions as a docking station, an interdomain involved in ARC hexamerization, and a C-terminal ATPase domain of the AAA type.</text>
</comment>
<comment type="similarity">
    <text evidence="1">Belongs to the AAA ATPase family.</text>
</comment>
<feature type="chain" id="PRO_0000396992" description="Proteasome-associated ATPase">
    <location>
        <begin position="1"/>
        <end position="602"/>
    </location>
</feature>
<feature type="region of interest" description="Docks into pockets in the proteasome alpha-ring" evidence="1">
    <location>
        <begin position="601"/>
        <end position="602"/>
    </location>
</feature>
<feature type="coiled-coil region" evidence="1">
    <location>
        <begin position="13"/>
        <end position="89"/>
    </location>
</feature>
<feature type="binding site" evidence="1">
    <location>
        <begin position="289"/>
        <end position="294"/>
    </location>
    <ligand>
        <name>ATP</name>
        <dbReference type="ChEBI" id="CHEBI:30616"/>
    </ligand>
</feature>
<evidence type="ECO:0000255" key="1">
    <source>
        <dbReference type="HAMAP-Rule" id="MF_02112"/>
    </source>
</evidence>
<dbReference type="EMBL" id="CU458896">
    <property type="protein sequence ID" value="CAM62243.1"/>
    <property type="molecule type" value="Genomic_DNA"/>
</dbReference>
<dbReference type="SMR" id="B1MAH2"/>
<dbReference type="GeneID" id="93379098"/>
<dbReference type="KEGG" id="mab:MAB_2162"/>
<dbReference type="UniPathway" id="UPA00997"/>
<dbReference type="Proteomes" id="UP000007137">
    <property type="component" value="Chromosome"/>
</dbReference>
<dbReference type="GO" id="GO:0000502">
    <property type="term" value="C:proteasome complex"/>
    <property type="evidence" value="ECO:0007669"/>
    <property type="project" value="UniProtKB-KW"/>
</dbReference>
<dbReference type="GO" id="GO:0005524">
    <property type="term" value="F:ATP binding"/>
    <property type="evidence" value="ECO:0007669"/>
    <property type="project" value="UniProtKB-UniRule"/>
</dbReference>
<dbReference type="GO" id="GO:0016887">
    <property type="term" value="F:ATP hydrolysis activity"/>
    <property type="evidence" value="ECO:0007669"/>
    <property type="project" value="UniProtKB-UniRule"/>
</dbReference>
<dbReference type="GO" id="GO:0019941">
    <property type="term" value="P:modification-dependent protein catabolic process"/>
    <property type="evidence" value="ECO:0007669"/>
    <property type="project" value="InterPro"/>
</dbReference>
<dbReference type="GO" id="GO:0010498">
    <property type="term" value="P:proteasomal protein catabolic process"/>
    <property type="evidence" value="ECO:0007669"/>
    <property type="project" value="InterPro"/>
</dbReference>
<dbReference type="FunFam" id="1.20.5.170:FF:000018">
    <property type="entry name" value="AAA ATPase forming ring-shaped complexes"/>
    <property type="match status" value="1"/>
</dbReference>
<dbReference type="FunFam" id="2.40.50.140:FF:000169">
    <property type="entry name" value="AAA ATPase forming ring-shaped complexes"/>
    <property type="match status" value="1"/>
</dbReference>
<dbReference type="FunFam" id="3.40.50.300:FF:000155">
    <property type="entry name" value="AAA ATPase forming ring-shaped complexes"/>
    <property type="match status" value="1"/>
</dbReference>
<dbReference type="Gene3D" id="1.10.8.60">
    <property type="match status" value="1"/>
</dbReference>
<dbReference type="Gene3D" id="1.20.5.170">
    <property type="match status" value="1"/>
</dbReference>
<dbReference type="Gene3D" id="2.40.50.140">
    <property type="entry name" value="Nucleic acid-binding proteins"/>
    <property type="match status" value="2"/>
</dbReference>
<dbReference type="Gene3D" id="3.40.50.300">
    <property type="entry name" value="P-loop containing nucleotide triphosphate hydrolases"/>
    <property type="match status" value="1"/>
</dbReference>
<dbReference type="HAMAP" id="MF_02112">
    <property type="entry name" value="ARC_ATPase"/>
    <property type="match status" value="1"/>
</dbReference>
<dbReference type="InterPro" id="IPR003593">
    <property type="entry name" value="AAA+_ATPase"/>
</dbReference>
<dbReference type="InterPro" id="IPR050168">
    <property type="entry name" value="AAA_ATPase_domain"/>
</dbReference>
<dbReference type="InterPro" id="IPR003959">
    <property type="entry name" value="ATPase_AAA_core"/>
</dbReference>
<dbReference type="InterPro" id="IPR003960">
    <property type="entry name" value="ATPase_AAA_CS"/>
</dbReference>
<dbReference type="InterPro" id="IPR012340">
    <property type="entry name" value="NA-bd_OB-fold"/>
</dbReference>
<dbReference type="InterPro" id="IPR027417">
    <property type="entry name" value="P-loop_NTPase"/>
</dbReference>
<dbReference type="InterPro" id="IPR032501">
    <property type="entry name" value="Prot_ATP_ID_OB_2nd"/>
</dbReference>
<dbReference type="InterPro" id="IPR041626">
    <property type="entry name" value="Prot_ATP_ID_OB_N"/>
</dbReference>
<dbReference type="InterPro" id="IPR022482">
    <property type="entry name" value="Proteasome_ATPase"/>
</dbReference>
<dbReference type="NCBIfam" id="TIGR03689">
    <property type="entry name" value="pup_AAA"/>
    <property type="match status" value="1"/>
</dbReference>
<dbReference type="PANTHER" id="PTHR23077">
    <property type="entry name" value="AAA-FAMILY ATPASE"/>
    <property type="match status" value="1"/>
</dbReference>
<dbReference type="PANTHER" id="PTHR23077:SF144">
    <property type="entry name" value="PROTEASOME-ASSOCIATED ATPASE"/>
    <property type="match status" value="1"/>
</dbReference>
<dbReference type="Pfam" id="PF00004">
    <property type="entry name" value="AAA"/>
    <property type="match status" value="1"/>
</dbReference>
<dbReference type="Pfam" id="PF16450">
    <property type="entry name" value="Prot_ATP_ID_OB_C"/>
    <property type="match status" value="1"/>
</dbReference>
<dbReference type="Pfam" id="PF17758">
    <property type="entry name" value="Prot_ATP_ID_OB_N"/>
    <property type="match status" value="1"/>
</dbReference>
<dbReference type="SMART" id="SM00382">
    <property type="entry name" value="AAA"/>
    <property type="match status" value="1"/>
</dbReference>
<dbReference type="SUPFAM" id="SSF52540">
    <property type="entry name" value="P-loop containing nucleoside triphosphate hydrolases"/>
    <property type="match status" value="1"/>
</dbReference>
<dbReference type="PROSITE" id="PS00674">
    <property type="entry name" value="AAA"/>
    <property type="match status" value="1"/>
</dbReference>
<name>ARC_MYCA9</name>
<proteinExistence type="inferred from homology"/>
<reference key="1">
    <citation type="journal article" date="2009" name="PLoS ONE">
        <title>Non mycobacterial virulence genes in the genome of the emerging pathogen Mycobacterium abscessus.</title>
        <authorList>
            <person name="Ripoll F."/>
            <person name="Pasek S."/>
            <person name="Schenowitz C."/>
            <person name="Dossat C."/>
            <person name="Barbe V."/>
            <person name="Rottman M."/>
            <person name="Macheras E."/>
            <person name="Heym B."/>
            <person name="Herrmann J.L."/>
            <person name="Daffe M."/>
            <person name="Brosch R."/>
            <person name="Risler J.L."/>
            <person name="Gaillard J.L."/>
        </authorList>
    </citation>
    <scope>NUCLEOTIDE SEQUENCE [LARGE SCALE GENOMIC DNA]</scope>
    <source>
        <strain>ATCC 19977 / DSM 44196 / CCUG 20993 / CIP 104536 / JCM 13569 / NCTC 13031 / TMC 1543 / L948</strain>
    </source>
</reference>
<organism>
    <name type="scientific">Mycobacteroides abscessus (strain ATCC 19977 / DSM 44196 / CCUG 20993 / CIP 104536 / JCM 13569 / NCTC 13031 / TMC 1543 / L948)</name>
    <name type="common">Mycobacterium abscessus</name>
    <dbReference type="NCBI Taxonomy" id="561007"/>
    <lineage>
        <taxon>Bacteria</taxon>
        <taxon>Bacillati</taxon>
        <taxon>Actinomycetota</taxon>
        <taxon>Actinomycetes</taxon>
        <taxon>Mycobacteriales</taxon>
        <taxon>Mycobacteriaceae</taxon>
        <taxon>Mycobacteroides</taxon>
        <taxon>Mycobacteroides abscessus</taxon>
    </lineage>
</organism>
<accession>B1MAH2</accession>